<dbReference type="EMBL" id="AY261360">
    <property type="status" value="NOT_ANNOTATED_CDS"/>
    <property type="molecule type" value="Genomic_DNA"/>
</dbReference>
<dbReference type="Proteomes" id="UP000000861">
    <property type="component" value="Segment"/>
</dbReference>
<name>36015_ASFK5</name>
<evidence type="ECO:0000250" key="1">
    <source>
        <dbReference type="UniProtKB" id="Q65141"/>
    </source>
</evidence>
<evidence type="ECO:0000305" key="2"/>
<protein>
    <recommendedName>
        <fullName>Protein MGF 360-15R</fullName>
    </recommendedName>
</protein>
<keyword id="KW-0244">Early protein</keyword>
<organism>
    <name type="scientific">African swine fever virus (isolate Pig/Kenya/KEN-50/1950)</name>
    <name type="common">ASFV</name>
    <dbReference type="NCBI Taxonomy" id="561445"/>
    <lineage>
        <taxon>Viruses</taxon>
        <taxon>Varidnaviria</taxon>
        <taxon>Bamfordvirae</taxon>
        <taxon>Nucleocytoviricota</taxon>
        <taxon>Pokkesviricetes</taxon>
        <taxon>Asfuvirales</taxon>
        <taxon>Asfarviridae</taxon>
        <taxon>Asfivirus</taxon>
        <taxon>African swine fever virus</taxon>
    </lineage>
</organism>
<accession>P0C9Q9</accession>
<feature type="chain" id="PRO_0000373294" description="Protein MGF 360-15R">
    <location>
        <begin position="1"/>
        <end position="269"/>
    </location>
</feature>
<proteinExistence type="inferred from homology"/>
<sequence length="269" mass="30963">MVLIQFLTGFFYLYGKRLFSVSKVMDMICLDYYTILPAPLAMMLAARVKNYDLMKKLHEWEIPVDYALLVVDDVPTIDYCLSLGANSPTRAQKRRLLRDTTFNPVYKYLMNCSGFPTKREKNIPCDVQCERLQKTIIKELVFNCSVLLEMILLSEKEYAYALHYAAKYNQLPILMYCWQQSTNAESILLKTCCSDKNINCFNHCILYGGAQNLNAAMIEAAKHDARMLINYCVMLGGKSLNEARETAIIFGHIECAQHCSRLQSYVMRD</sequence>
<gene>
    <name type="ordered locus">Ken-050</name>
</gene>
<reference key="1">
    <citation type="submission" date="2003-03" db="EMBL/GenBank/DDBJ databases">
        <title>African swine fever virus genomes.</title>
        <authorList>
            <person name="Kutish G.F."/>
            <person name="Rock D.L."/>
        </authorList>
    </citation>
    <scope>NUCLEOTIDE SEQUENCE [LARGE SCALE GENOMIC DNA]</scope>
</reference>
<comment type="function">
    <text evidence="1">Plays a role in virus cell tropism, and may be required for efficient virus replication in macrophages.</text>
</comment>
<comment type="induction">
    <text evidence="2">Expressed in the early phase of the viral replicative cycle.</text>
</comment>
<comment type="similarity">
    <text evidence="2">Belongs to the asfivirus MGF 360 family.</text>
</comment>
<organismHost>
    <name type="scientific">Ornithodoros</name>
    <name type="common">relapsing fever ticks</name>
    <dbReference type="NCBI Taxonomy" id="6937"/>
</organismHost>
<organismHost>
    <name type="scientific">Phacochoerus aethiopicus</name>
    <name type="common">Warthog</name>
    <dbReference type="NCBI Taxonomy" id="85517"/>
</organismHost>
<organismHost>
    <name type="scientific">Phacochoerus africanus</name>
    <name type="common">Warthog</name>
    <dbReference type="NCBI Taxonomy" id="41426"/>
</organismHost>
<organismHost>
    <name type="scientific">Potamochoerus larvatus</name>
    <name type="common">Bushpig</name>
    <dbReference type="NCBI Taxonomy" id="273792"/>
</organismHost>
<organismHost>
    <name type="scientific">Sus scrofa</name>
    <name type="common">Pig</name>
    <dbReference type="NCBI Taxonomy" id="9823"/>
</organismHost>